<comment type="catalytic activity">
    <reaction evidence="1">
        <text>L-cysteine + L-glutamate + ATP = gamma-L-glutamyl-L-cysteine + ADP + phosphate + H(+)</text>
        <dbReference type="Rhea" id="RHEA:13285"/>
        <dbReference type="ChEBI" id="CHEBI:15378"/>
        <dbReference type="ChEBI" id="CHEBI:29985"/>
        <dbReference type="ChEBI" id="CHEBI:30616"/>
        <dbReference type="ChEBI" id="CHEBI:35235"/>
        <dbReference type="ChEBI" id="CHEBI:43474"/>
        <dbReference type="ChEBI" id="CHEBI:58173"/>
        <dbReference type="ChEBI" id="CHEBI:456216"/>
        <dbReference type="EC" id="6.3.2.2"/>
    </reaction>
</comment>
<comment type="pathway">
    <text evidence="1">Sulfur metabolism; glutathione biosynthesis; glutathione from L-cysteine and L-glutamate: step 1/2.</text>
</comment>
<comment type="similarity">
    <text evidence="1">Belongs to the glutamate--cysteine ligase type 1 family. Type 1 subfamily.</text>
</comment>
<name>GSH1_SALAR</name>
<sequence>MIPDVSQALAWLEKHPQALKGIQRGLERETLRVNADGTLATTGHPEALGSALTHKWITTDFAEALLEFITPVDGDIQHMLTFMRDLHRYTARKLGDERMWPLSMPCYIAEGQDIELAQYGTSNTGRFKTLYREGLKNRYGALMQTISGVHYNFSLPMAFWQAKCGVTEGDAAKEKISAGYFRLIRNYYRFGWVIPYLFGASPAICSSFLQGKPTTLPFEKTDCGMYYLPYATSLRLSDLGYTNKSQSNLGITFNDLHEYVAGLKRAIKTPSEEYVQIGLEKDGKRLQINSNVLQIENELYAPIRPKRVTRSGESPSDALLRGGIEYIEVRSLDINPFSPIGVDEQQVRFLDLFMVWCVLADAPEMSSSELLCTRANWNRVILEGRKPGLTLGIGCETAQFPLPKVGKDLFRDLRRVAQTLDSIHGGEDYQKVCDELVACFDNPELTFSARILRSMIDTGIGGTGKAFGEAYRNLLREEPLEILQEEEFIAERDASVRRQQEIEAADTEPFAAWLAKHD</sequence>
<keyword id="KW-0067">ATP-binding</keyword>
<keyword id="KW-0317">Glutathione biosynthesis</keyword>
<keyword id="KW-0436">Ligase</keyword>
<keyword id="KW-0547">Nucleotide-binding</keyword>
<keyword id="KW-1185">Reference proteome</keyword>
<dbReference type="EC" id="6.3.2.2" evidence="1"/>
<dbReference type="EMBL" id="CP000880">
    <property type="protein sequence ID" value="ABX20103.1"/>
    <property type="molecule type" value="Genomic_DNA"/>
</dbReference>
<dbReference type="SMR" id="A9MFZ5"/>
<dbReference type="STRING" id="41514.SARI_00155"/>
<dbReference type="KEGG" id="ses:SARI_00155"/>
<dbReference type="HOGENOM" id="CLU_020728_3_0_6"/>
<dbReference type="UniPathway" id="UPA00142">
    <property type="reaction ID" value="UER00209"/>
</dbReference>
<dbReference type="Proteomes" id="UP000002084">
    <property type="component" value="Chromosome"/>
</dbReference>
<dbReference type="GO" id="GO:0005829">
    <property type="term" value="C:cytosol"/>
    <property type="evidence" value="ECO:0007669"/>
    <property type="project" value="TreeGrafter"/>
</dbReference>
<dbReference type="GO" id="GO:0005524">
    <property type="term" value="F:ATP binding"/>
    <property type="evidence" value="ECO:0007669"/>
    <property type="project" value="UniProtKB-KW"/>
</dbReference>
<dbReference type="GO" id="GO:0004357">
    <property type="term" value="F:glutamate-cysteine ligase activity"/>
    <property type="evidence" value="ECO:0007669"/>
    <property type="project" value="UniProtKB-UniRule"/>
</dbReference>
<dbReference type="GO" id="GO:0046872">
    <property type="term" value="F:metal ion binding"/>
    <property type="evidence" value="ECO:0007669"/>
    <property type="project" value="TreeGrafter"/>
</dbReference>
<dbReference type="GO" id="GO:0006750">
    <property type="term" value="P:glutathione biosynthetic process"/>
    <property type="evidence" value="ECO:0007669"/>
    <property type="project" value="UniProtKB-UniRule"/>
</dbReference>
<dbReference type="FunFam" id="3.30.590.20:FF:000001">
    <property type="entry name" value="Glutamate--cysteine ligase"/>
    <property type="match status" value="1"/>
</dbReference>
<dbReference type="Gene3D" id="3.30.590.20">
    <property type="match status" value="1"/>
</dbReference>
<dbReference type="HAMAP" id="MF_00578">
    <property type="entry name" value="Glu_cys_ligase"/>
    <property type="match status" value="1"/>
</dbReference>
<dbReference type="InterPro" id="IPR014746">
    <property type="entry name" value="Gln_synth/guanido_kin_cat_dom"/>
</dbReference>
<dbReference type="InterPro" id="IPR007370">
    <property type="entry name" value="Glu_cys_ligase"/>
</dbReference>
<dbReference type="InterPro" id="IPR006334">
    <property type="entry name" value="Glut_cys_ligase"/>
</dbReference>
<dbReference type="NCBIfam" id="TIGR01434">
    <property type="entry name" value="glu_cys_ligase"/>
    <property type="match status" value="1"/>
</dbReference>
<dbReference type="PANTHER" id="PTHR38761">
    <property type="entry name" value="GLUTAMATE--CYSTEINE LIGASE"/>
    <property type="match status" value="1"/>
</dbReference>
<dbReference type="PANTHER" id="PTHR38761:SF1">
    <property type="entry name" value="GLUTAMATE--CYSTEINE LIGASE"/>
    <property type="match status" value="1"/>
</dbReference>
<dbReference type="Pfam" id="PF04262">
    <property type="entry name" value="Glu_cys_ligase"/>
    <property type="match status" value="1"/>
</dbReference>
<dbReference type="SUPFAM" id="SSF55931">
    <property type="entry name" value="Glutamine synthetase/guanido kinase"/>
    <property type="match status" value="1"/>
</dbReference>
<gene>
    <name evidence="1" type="primary">gshA</name>
    <name type="ordered locus">SARI_00155</name>
</gene>
<feature type="chain" id="PRO_1000082359" description="Glutamate--cysteine ligase">
    <location>
        <begin position="1"/>
        <end position="518"/>
    </location>
</feature>
<accession>A9MFZ5</accession>
<proteinExistence type="inferred from homology"/>
<reference key="1">
    <citation type="submission" date="2007-11" db="EMBL/GenBank/DDBJ databases">
        <authorList>
            <consortium name="The Salmonella enterica serovar Arizonae Genome Sequencing Project"/>
            <person name="McClelland M."/>
            <person name="Sanderson E.K."/>
            <person name="Porwollik S."/>
            <person name="Spieth J."/>
            <person name="Clifton W.S."/>
            <person name="Fulton R."/>
            <person name="Chunyan W."/>
            <person name="Wollam A."/>
            <person name="Shah N."/>
            <person name="Pepin K."/>
            <person name="Bhonagiri V."/>
            <person name="Nash W."/>
            <person name="Johnson M."/>
            <person name="Thiruvilangam P."/>
            <person name="Wilson R."/>
        </authorList>
    </citation>
    <scope>NUCLEOTIDE SEQUENCE [LARGE SCALE GENOMIC DNA]</scope>
    <source>
        <strain>ATCC BAA-731 / CDC346-86 / RSK2980</strain>
    </source>
</reference>
<evidence type="ECO:0000255" key="1">
    <source>
        <dbReference type="HAMAP-Rule" id="MF_00578"/>
    </source>
</evidence>
<organism>
    <name type="scientific">Salmonella arizonae (strain ATCC BAA-731 / CDC346-86 / RSK2980)</name>
    <dbReference type="NCBI Taxonomy" id="41514"/>
    <lineage>
        <taxon>Bacteria</taxon>
        <taxon>Pseudomonadati</taxon>
        <taxon>Pseudomonadota</taxon>
        <taxon>Gammaproteobacteria</taxon>
        <taxon>Enterobacterales</taxon>
        <taxon>Enterobacteriaceae</taxon>
        <taxon>Salmonella</taxon>
    </lineage>
</organism>
<protein>
    <recommendedName>
        <fullName evidence="1">Glutamate--cysteine ligase</fullName>
        <ecNumber evidence="1">6.3.2.2</ecNumber>
    </recommendedName>
    <alternativeName>
        <fullName evidence="1">Gamma-ECS</fullName>
        <shortName evidence="1">GCS</shortName>
    </alternativeName>
    <alternativeName>
        <fullName evidence="1">Gamma-glutamylcysteine synthetase</fullName>
    </alternativeName>
</protein>